<dbReference type="EC" id="1.13.11.16" evidence="1"/>
<dbReference type="EMBL" id="CP001044">
    <property type="protein sequence ID" value="ACC73648.1"/>
    <property type="molecule type" value="Genomic_DNA"/>
</dbReference>
<dbReference type="RefSeq" id="WP_012403820.1">
    <property type="nucleotide sequence ID" value="NC_010623.1"/>
</dbReference>
<dbReference type="SMR" id="B2JQV7"/>
<dbReference type="STRING" id="391038.Bphy_4536"/>
<dbReference type="KEGG" id="bph:Bphy_4536"/>
<dbReference type="eggNOG" id="COG3384">
    <property type="taxonomic scope" value="Bacteria"/>
</dbReference>
<dbReference type="HOGENOM" id="CLU_078149_0_0_4"/>
<dbReference type="OrthoDB" id="8673673at2"/>
<dbReference type="UniPathway" id="UPA00714"/>
<dbReference type="Proteomes" id="UP000001192">
    <property type="component" value="Chromosome 2"/>
</dbReference>
<dbReference type="GO" id="GO:0047070">
    <property type="term" value="F:3-carboxyethylcatechol 2,3-dioxygenase activity"/>
    <property type="evidence" value="ECO:0007669"/>
    <property type="project" value="UniProtKB-UniRule"/>
</dbReference>
<dbReference type="GO" id="GO:0008198">
    <property type="term" value="F:ferrous iron binding"/>
    <property type="evidence" value="ECO:0007669"/>
    <property type="project" value="InterPro"/>
</dbReference>
<dbReference type="GO" id="GO:0019380">
    <property type="term" value="P:3-phenylpropionate catabolic process"/>
    <property type="evidence" value="ECO:0007669"/>
    <property type="project" value="UniProtKB-UniRule"/>
</dbReference>
<dbReference type="CDD" id="cd07365">
    <property type="entry name" value="MhpB_like"/>
    <property type="match status" value="1"/>
</dbReference>
<dbReference type="Gene3D" id="3.40.830.10">
    <property type="entry name" value="LigB-like"/>
    <property type="match status" value="1"/>
</dbReference>
<dbReference type="HAMAP" id="MF_01653">
    <property type="entry name" value="MhpB"/>
    <property type="match status" value="1"/>
</dbReference>
<dbReference type="InterPro" id="IPR023789">
    <property type="entry name" value="DHPP/DHXA_dioxygenase"/>
</dbReference>
<dbReference type="InterPro" id="IPR004183">
    <property type="entry name" value="Xdiol_dOase_suB"/>
</dbReference>
<dbReference type="NCBIfam" id="NF009908">
    <property type="entry name" value="PRK13370.1-2"/>
    <property type="match status" value="1"/>
</dbReference>
<dbReference type="NCBIfam" id="NF009910">
    <property type="entry name" value="PRK13370.1-4"/>
    <property type="match status" value="1"/>
</dbReference>
<dbReference type="Pfam" id="PF02900">
    <property type="entry name" value="LigB"/>
    <property type="match status" value="1"/>
</dbReference>
<dbReference type="SUPFAM" id="SSF53213">
    <property type="entry name" value="LigB-like"/>
    <property type="match status" value="1"/>
</dbReference>
<keyword id="KW-0058">Aromatic hydrocarbons catabolism</keyword>
<keyword id="KW-0223">Dioxygenase</keyword>
<keyword id="KW-0408">Iron</keyword>
<keyword id="KW-0560">Oxidoreductase</keyword>
<keyword id="KW-1185">Reference proteome</keyword>
<evidence type="ECO:0000255" key="1">
    <source>
        <dbReference type="HAMAP-Rule" id="MF_01653"/>
    </source>
</evidence>
<protein>
    <recommendedName>
        <fullName evidence="1">2,3-dihydroxyphenylpropionate/2,3-dihydroxicinnamic acid 1,2-dioxygenase</fullName>
        <ecNumber evidence="1">1.13.11.16</ecNumber>
    </recommendedName>
    <alternativeName>
        <fullName evidence="1">3-carboxyethylcatechol 2,3-dioxygenase</fullName>
    </alternativeName>
</protein>
<name>MHPB_PARP8</name>
<accession>B2JQV7</accession>
<sequence>MPIHLECMSHTPLHGYFDPAPEVVAEVERVQRVARERVDAFDPELVIVFAPDHYNGFFYDVMPQFCIGVRATAIGDFNSAAGPLPVARDVALALADAALASDIDVAVSYRMQVDHGCAQALDVLTGGIDRYPVVPVFINSVAPPMASCRRARLLGDAIGRAAARMNRRVLLIGSGGMSHEPPVPEIAAADDVVAERLIAGRNPSPESRNARQSRTIAAAKAFAAGDSRLHPLNPAWDRALLELLERGEIAAADGLTNEAITRDAGKSAHEIRTWVAAFGALAASGPYAASIDYYRAIPEWIAGFGAMHAHEQTLSRR</sequence>
<comment type="function">
    <text evidence="1">Catalyzes the non-heme iron(II)-dependent oxidative cleavage of 2,3-dihydroxyphenylpropionic acid and 2,3-dihydroxicinnamic acid into 2-hydroxy-6-ketononadienedioate and 2-hydroxy-6-ketononatrienedioate, respectively.</text>
</comment>
<comment type="catalytic activity">
    <reaction evidence="1">
        <text>3-(2,3-dihydroxyphenyl)propanoate + O2 = (2Z,4E)-2-hydroxy-6-oxonona-2,4-dienedioate + H(+)</text>
        <dbReference type="Rhea" id="RHEA:23840"/>
        <dbReference type="ChEBI" id="CHEBI:15378"/>
        <dbReference type="ChEBI" id="CHEBI:15379"/>
        <dbReference type="ChEBI" id="CHEBI:46951"/>
        <dbReference type="ChEBI" id="CHEBI:66887"/>
        <dbReference type="EC" id="1.13.11.16"/>
    </reaction>
</comment>
<comment type="catalytic activity">
    <reaction evidence="1">
        <text>(2E)-3-(2,3-dihydroxyphenyl)prop-2-enoate + O2 = (2Z,4E,7E)-2-hydroxy-6-oxonona-2,4,7-trienedioate + H(+)</text>
        <dbReference type="Rhea" id="RHEA:25054"/>
        <dbReference type="ChEBI" id="CHEBI:15378"/>
        <dbReference type="ChEBI" id="CHEBI:15379"/>
        <dbReference type="ChEBI" id="CHEBI:58642"/>
        <dbReference type="ChEBI" id="CHEBI:66888"/>
        <dbReference type="EC" id="1.13.11.16"/>
    </reaction>
</comment>
<comment type="cofactor">
    <cofactor evidence="1">
        <name>Fe(2+)</name>
        <dbReference type="ChEBI" id="CHEBI:29033"/>
    </cofactor>
</comment>
<comment type="pathway">
    <text evidence="1">Aromatic compound metabolism; 3-phenylpropanoate degradation.</text>
</comment>
<comment type="subunit">
    <text evidence="1">Homotetramer.</text>
</comment>
<comment type="similarity">
    <text evidence="1">Belongs to the LigB/MhpB extradiol dioxygenase family.</text>
</comment>
<organism>
    <name type="scientific">Paraburkholderia phymatum (strain DSM 17167 / CIP 108236 / LMG 21445 / STM815)</name>
    <name type="common">Burkholderia phymatum</name>
    <dbReference type="NCBI Taxonomy" id="391038"/>
    <lineage>
        <taxon>Bacteria</taxon>
        <taxon>Pseudomonadati</taxon>
        <taxon>Pseudomonadota</taxon>
        <taxon>Betaproteobacteria</taxon>
        <taxon>Burkholderiales</taxon>
        <taxon>Burkholderiaceae</taxon>
        <taxon>Paraburkholderia</taxon>
    </lineage>
</organism>
<feature type="chain" id="PRO_1000186999" description="2,3-dihydroxyphenylpropionate/2,3-dihydroxicinnamic acid 1,2-dioxygenase">
    <location>
        <begin position="1"/>
        <end position="317"/>
    </location>
</feature>
<feature type="active site" description="Proton donor" evidence="1">
    <location>
        <position position="115"/>
    </location>
</feature>
<feature type="active site" description="Proton acceptor" evidence="1">
    <location>
        <position position="179"/>
    </location>
</feature>
<proteinExistence type="inferred from homology"/>
<gene>
    <name evidence="1" type="primary">mhpB</name>
    <name type="ordered locus">Bphy_4536</name>
</gene>
<reference key="1">
    <citation type="journal article" date="2014" name="Stand. Genomic Sci.">
        <title>Complete genome sequence of Burkholderia phymatum STM815(T), a broad host range and efficient nitrogen-fixing symbiont of Mimosa species.</title>
        <authorList>
            <person name="Moulin L."/>
            <person name="Klonowska A."/>
            <person name="Caroline B."/>
            <person name="Booth K."/>
            <person name="Vriezen J.A."/>
            <person name="Melkonian R."/>
            <person name="James E.K."/>
            <person name="Young J.P."/>
            <person name="Bena G."/>
            <person name="Hauser L."/>
            <person name="Land M."/>
            <person name="Kyrpides N."/>
            <person name="Bruce D."/>
            <person name="Chain P."/>
            <person name="Copeland A."/>
            <person name="Pitluck S."/>
            <person name="Woyke T."/>
            <person name="Lizotte-Waniewski M."/>
            <person name="Bristow J."/>
            <person name="Riley M."/>
        </authorList>
    </citation>
    <scope>NUCLEOTIDE SEQUENCE [LARGE SCALE GENOMIC DNA]</scope>
    <source>
        <strain>DSM 17167 / CIP 108236 / LMG 21445 / STM815</strain>
    </source>
</reference>